<protein>
    <recommendedName>
        <fullName>ADP,ATP carrier protein 1, chloroplastic</fullName>
    </recommendedName>
    <alternativeName>
        <fullName>ADP/ATP translocase 1</fullName>
    </alternativeName>
    <alternativeName>
        <fullName>Adenine nucleotide translocase 1</fullName>
    </alternativeName>
</protein>
<feature type="transit peptide" description="Chloroplast" evidence="5">
    <location>
        <begin position="1"/>
        <end position="79"/>
    </location>
</feature>
<feature type="chain" id="PRO_0000034359" description="ADP,ATP carrier protein 1, chloroplastic">
    <location>
        <begin position="80"/>
        <end position="624"/>
    </location>
</feature>
<feature type="transmembrane region" description="Helical" evidence="1">
    <location>
        <begin position="108"/>
        <end position="128"/>
    </location>
</feature>
<feature type="transmembrane region" description="Helical" evidence="1">
    <location>
        <begin position="182"/>
        <end position="202"/>
    </location>
</feature>
<feature type="transmembrane region" description="Helical" evidence="1">
    <location>
        <begin position="240"/>
        <end position="260"/>
    </location>
</feature>
<feature type="transmembrane region" description="Helical" evidence="1">
    <location>
        <begin position="315"/>
        <end position="335"/>
    </location>
</feature>
<feature type="transmembrane region" description="Helical" evidence="1">
    <location>
        <begin position="446"/>
        <end position="466"/>
    </location>
</feature>
<feature type="transmembrane region" description="Helical" evidence="1">
    <location>
        <begin position="545"/>
        <end position="565"/>
    </location>
</feature>
<feature type="region of interest" description="Disordered" evidence="2">
    <location>
        <begin position="579"/>
        <end position="624"/>
    </location>
</feature>
<feature type="compositionally biased region" description="Low complexity" evidence="2">
    <location>
        <begin position="602"/>
        <end position="624"/>
    </location>
</feature>
<feature type="modified residue" description="N-acetylalanine" evidence="5">
    <location>
        <position position="80"/>
    </location>
</feature>
<feature type="sequence conflict" description="In Ref. 1; CAA89201." evidence="4" ref="1">
    <original>LSLSFNGHKKFQTFEPTLHGISISHKERSTEFICKAEAAAAGDGAVFGEG</original>
    <variation>CLYPLTGTRNFKPLSQPCMGFRFPTKREAPSSYARRRRGCWRRSCLRRS</variation>
    <location>
        <begin position="45"/>
        <end position="94"/>
    </location>
</feature>
<feature type="sequence conflict" description="In Ref. 1; CAA89201." evidence="4" ref="1">
    <original>P</original>
    <variation>R</variation>
    <location>
        <position position="103"/>
    </location>
</feature>
<feature type="sequence conflict" description="In Ref. 1; CAA89201." evidence="4" ref="1">
    <original>A</original>
    <variation>G</variation>
    <location>
        <position position="197"/>
    </location>
</feature>
<feature type="sequence conflict" description="In Ref. 5; AAK76577." evidence="4" ref="5">
    <original>A</original>
    <variation>G</variation>
    <location>
        <position position="281"/>
    </location>
</feature>
<sequence length="624" mass="68134">MEAVIQTRGLLSLPTKPIGVRSQLQPSHGLKQRLFAAKPRNLHGLSLSFNGHKKFQTFEPTLHGISISHKERSTEFICKAEAAAAGDGAVFGEGDSAAVVASPKIFGVEVATLKKIIPLGLMFFCILFNYTILRDTKDVLVVTAKGSSAEIIPFLKTWVNLPMAIGFMLLYTKLSNVLSKKALFYTVIVPFIIYFGAFGFVMYPLSNYIHPEALADKLLTTLGPRFMGPIAILRIWSFCLFYVMAELWGSVVVSVLFWGFANQITTVDEAKKFYPLFGLGANVALIFSGRTVKYFSNLRKNLGPGVDGWAVSLKAMMSIVVGMGLAICLLYWWVNRYVPLPTRSKNKKEKPKMGTMESLKFLVSSPYIRDLATLVVAYGISINLVEVTWKSKLKAQFPSPNEYSAFMGDFSTCTGVATFTMMLLSQYVFNKYGWGVAAKITPTVLLLTGVAFFSLILFGGPFAPLVAKLGMTPLLAAVYVGALQNIFSKSAKYSLFDPCKEMAYIPLDEDTKVKGKAAIDVVCNPLGKSGGALIQQFMILSFGSLANSTPYLGMILLVIVTAWLAAAKSLEGQFNSLRSEEELEKEMERASSVKIPVVSQDESGNGSLGESPSSSPEKSAPTNL</sequence>
<proteinExistence type="evidence at protein level"/>
<accession>Q39002</accession>
<accession>Q94AN9</accession>
<accession>Q9C974</accession>
<gene>
    <name type="primary">AATP1</name>
    <name type="ordered locus">At1g80300</name>
    <name type="ORF">F5I6.5</name>
</gene>
<organism>
    <name type="scientific">Arabidopsis thaliana</name>
    <name type="common">Mouse-ear cress</name>
    <dbReference type="NCBI Taxonomy" id="3702"/>
    <lineage>
        <taxon>Eukaryota</taxon>
        <taxon>Viridiplantae</taxon>
        <taxon>Streptophyta</taxon>
        <taxon>Embryophyta</taxon>
        <taxon>Tracheophyta</taxon>
        <taxon>Spermatophyta</taxon>
        <taxon>Magnoliopsida</taxon>
        <taxon>eudicotyledons</taxon>
        <taxon>Gunneridae</taxon>
        <taxon>Pentapetalae</taxon>
        <taxon>rosids</taxon>
        <taxon>malvids</taxon>
        <taxon>Brassicales</taxon>
        <taxon>Brassicaceae</taxon>
        <taxon>Camelineae</taxon>
        <taxon>Arabidopsis</taxon>
    </lineage>
</organism>
<comment type="function">
    <text evidence="3">May function as an ATP importer.</text>
</comment>
<comment type="subcellular location">
    <subcellularLocation>
        <location evidence="3">Plastid</location>
        <location evidence="3">Chloroplast membrane</location>
        <topology evidence="3">Multi-pass membrane protein</topology>
    </subcellularLocation>
</comment>
<comment type="similarity">
    <text evidence="4">Belongs to the ADP/ATP translocase tlc (TC 2.A.12.2) family.</text>
</comment>
<dbReference type="EMBL" id="Z49227">
    <property type="protein sequence ID" value="CAA89201.2"/>
    <property type="molecule type" value="mRNA"/>
</dbReference>
<dbReference type="EMBL" id="AC018848">
    <property type="protein sequence ID" value="AAG52434.1"/>
    <property type="molecule type" value="Genomic_DNA"/>
</dbReference>
<dbReference type="EMBL" id="CP002684">
    <property type="protein sequence ID" value="AEE36385.1"/>
    <property type="molecule type" value="Genomic_DNA"/>
</dbReference>
<dbReference type="EMBL" id="AF428316">
    <property type="protein sequence ID" value="AAL16246.1"/>
    <property type="molecule type" value="mRNA"/>
</dbReference>
<dbReference type="EMBL" id="AY045903">
    <property type="protein sequence ID" value="AAK76577.1"/>
    <property type="molecule type" value="mRNA"/>
</dbReference>
<dbReference type="PIR" id="E96834">
    <property type="entry name" value="E96834"/>
</dbReference>
<dbReference type="PIR" id="S68205">
    <property type="entry name" value="S68205"/>
</dbReference>
<dbReference type="RefSeq" id="NP_178146.1">
    <property type="nucleotide sequence ID" value="NM_106679.3"/>
</dbReference>
<dbReference type="BioGRID" id="29588">
    <property type="interactions" value="13"/>
</dbReference>
<dbReference type="FunCoup" id="Q39002">
    <property type="interactions" value="277"/>
</dbReference>
<dbReference type="IntAct" id="Q39002">
    <property type="interactions" value="13"/>
</dbReference>
<dbReference type="STRING" id="3702.Q39002"/>
<dbReference type="TCDB" id="2.A.12.1.16">
    <property type="family name" value="the atp:adp antiporter (aaa) family"/>
</dbReference>
<dbReference type="iPTMnet" id="Q39002"/>
<dbReference type="PaxDb" id="3702-AT1G80300.1"/>
<dbReference type="ProteomicsDB" id="246428"/>
<dbReference type="EnsemblPlants" id="AT1G80300.1">
    <property type="protein sequence ID" value="AT1G80300.1"/>
    <property type="gene ID" value="AT1G80300"/>
</dbReference>
<dbReference type="GeneID" id="844370"/>
<dbReference type="Gramene" id="AT1G80300.1">
    <property type="protein sequence ID" value="AT1G80300.1"/>
    <property type="gene ID" value="AT1G80300"/>
</dbReference>
<dbReference type="KEGG" id="ath:AT1G80300"/>
<dbReference type="Araport" id="AT1G80300"/>
<dbReference type="TAIR" id="AT1G80300">
    <property type="gene designation" value="NTT1"/>
</dbReference>
<dbReference type="eggNOG" id="ENOG502QSRY">
    <property type="taxonomic scope" value="Eukaryota"/>
</dbReference>
<dbReference type="HOGENOM" id="CLU_023964_0_0_1"/>
<dbReference type="InParanoid" id="Q39002"/>
<dbReference type="OMA" id="NGHQKFQ"/>
<dbReference type="PhylomeDB" id="Q39002"/>
<dbReference type="BioCyc" id="MetaCyc:AT1G80300-MONOMER"/>
<dbReference type="PRO" id="PR:Q39002"/>
<dbReference type="Proteomes" id="UP000006548">
    <property type="component" value="Chromosome 1"/>
</dbReference>
<dbReference type="ExpressionAtlas" id="Q39002">
    <property type="expression patterns" value="baseline and differential"/>
</dbReference>
<dbReference type="GO" id="GO:0009941">
    <property type="term" value="C:chloroplast envelope"/>
    <property type="evidence" value="ECO:0007005"/>
    <property type="project" value="TAIR"/>
</dbReference>
<dbReference type="GO" id="GO:0031969">
    <property type="term" value="C:chloroplast membrane"/>
    <property type="evidence" value="ECO:0007669"/>
    <property type="project" value="UniProtKB-SubCell"/>
</dbReference>
<dbReference type="GO" id="GO:0005739">
    <property type="term" value="C:mitochondrion"/>
    <property type="evidence" value="ECO:0007005"/>
    <property type="project" value="TAIR"/>
</dbReference>
<dbReference type="GO" id="GO:0009536">
    <property type="term" value="C:plastid"/>
    <property type="evidence" value="ECO:0007005"/>
    <property type="project" value="TAIR"/>
</dbReference>
<dbReference type="GO" id="GO:0005524">
    <property type="term" value="F:ATP binding"/>
    <property type="evidence" value="ECO:0007669"/>
    <property type="project" value="UniProtKB-KW"/>
</dbReference>
<dbReference type="GO" id="GO:0005471">
    <property type="term" value="F:ATP:ADP antiporter activity"/>
    <property type="evidence" value="ECO:0000314"/>
    <property type="project" value="TAIR"/>
</dbReference>
<dbReference type="InterPro" id="IPR004667">
    <property type="entry name" value="ADP_ATP_car_bac_type"/>
</dbReference>
<dbReference type="NCBIfam" id="TIGR00769">
    <property type="entry name" value="AAA"/>
    <property type="match status" value="1"/>
</dbReference>
<dbReference type="PANTHER" id="PTHR31187">
    <property type="match status" value="1"/>
</dbReference>
<dbReference type="PANTHER" id="PTHR31187:SF13">
    <property type="entry name" value="ADP,ATP CARRIER PROTEIN 1, CHLOROPLASTIC"/>
    <property type="match status" value="1"/>
</dbReference>
<dbReference type="Pfam" id="PF03219">
    <property type="entry name" value="TLC"/>
    <property type="match status" value="1"/>
</dbReference>
<keyword id="KW-0007">Acetylation</keyword>
<keyword id="KW-0067">ATP-binding</keyword>
<keyword id="KW-0150">Chloroplast</keyword>
<keyword id="KW-0472">Membrane</keyword>
<keyword id="KW-0547">Nucleotide-binding</keyword>
<keyword id="KW-0934">Plastid</keyword>
<keyword id="KW-1185">Reference proteome</keyword>
<keyword id="KW-0809">Transit peptide</keyword>
<keyword id="KW-0812">Transmembrane</keyword>
<keyword id="KW-1133">Transmembrane helix</keyword>
<keyword id="KW-0813">Transport</keyword>
<evidence type="ECO:0000255" key="1"/>
<evidence type="ECO:0000256" key="2">
    <source>
        <dbReference type="SAM" id="MobiDB-lite"/>
    </source>
</evidence>
<evidence type="ECO:0000269" key="3">
    <source>
    </source>
</evidence>
<evidence type="ECO:0000305" key="4"/>
<evidence type="ECO:0007744" key="5">
    <source>
    </source>
</evidence>
<name>TLC1_ARATH</name>
<reference key="1">
    <citation type="journal article" date="1995" name="FEBS Lett.">
        <title>Molecular characterization of an Arabidopsis thaliana cDNA encoding a novel putative adenylate translocator of higher plants.</title>
        <authorList>
            <person name="Kampfenkel K."/>
            <person name="Moehlmann T."/>
            <person name="Batz O."/>
            <person name="van Montagu M."/>
            <person name="Inze D."/>
            <person name="Neuhaus H.E."/>
        </authorList>
    </citation>
    <scope>NUCLEOTIDE SEQUENCE [MRNA]</scope>
    <source>
        <strain>cv. Columbia</strain>
        <tissue>Seedling</tissue>
    </source>
</reference>
<reference key="2">
    <citation type="submission" date="1999-11" db="EMBL/GenBank/DDBJ databases">
        <authorList>
            <person name="Kampfenkel K."/>
        </authorList>
    </citation>
    <scope>SEQUENCE REVISION</scope>
</reference>
<reference key="3">
    <citation type="journal article" date="2000" name="Nature">
        <title>Sequence and analysis of chromosome 1 of the plant Arabidopsis thaliana.</title>
        <authorList>
            <person name="Theologis A."/>
            <person name="Ecker J.R."/>
            <person name="Palm C.J."/>
            <person name="Federspiel N.A."/>
            <person name="Kaul S."/>
            <person name="White O."/>
            <person name="Alonso J."/>
            <person name="Altafi H."/>
            <person name="Araujo R."/>
            <person name="Bowman C.L."/>
            <person name="Brooks S.Y."/>
            <person name="Buehler E."/>
            <person name="Chan A."/>
            <person name="Chao Q."/>
            <person name="Chen H."/>
            <person name="Cheuk R.F."/>
            <person name="Chin C.W."/>
            <person name="Chung M.K."/>
            <person name="Conn L."/>
            <person name="Conway A.B."/>
            <person name="Conway A.R."/>
            <person name="Creasy T.H."/>
            <person name="Dewar K."/>
            <person name="Dunn P."/>
            <person name="Etgu P."/>
            <person name="Feldblyum T.V."/>
            <person name="Feng J.-D."/>
            <person name="Fong B."/>
            <person name="Fujii C.Y."/>
            <person name="Gill J.E."/>
            <person name="Goldsmith A.D."/>
            <person name="Haas B."/>
            <person name="Hansen N.F."/>
            <person name="Hughes B."/>
            <person name="Huizar L."/>
            <person name="Hunter J.L."/>
            <person name="Jenkins J."/>
            <person name="Johnson-Hopson C."/>
            <person name="Khan S."/>
            <person name="Khaykin E."/>
            <person name="Kim C.J."/>
            <person name="Koo H.L."/>
            <person name="Kremenetskaia I."/>
            <person name="Kurtz D.B."/>
            <person name="Kwan A."/>
            <person name="Lam B."/>
            <person name="Langin-Hooper S."/>
            <person name="Lee A."/>
            <person name="Lee J.M."/>
            <person name="Lenz C.A."/>
            <person name="Li J.H."/>
            <person name="Li Y.-P."/>
            <person name="Lin X."/>
            <person name="Liu S.X."/>
            <person name="Liu Z.A."/>
            <person name="Luros J.S."/>
            <person name="Maiti R."/>
            <person name="Marziali A."/>
            <person name="Militscher J."/>
            <person name="Miranda M."/>
            <person name="Nguyen M."/>
            <person name="Nierman W.C."/>
            <person name="Osborne B.I."/>
            <person name="Pai G."/>
            <person name="Peterson J."/>
            <person name="Pham P.K."/>
            <person name="Rizzo M."/>
            <person name="Rooney T."/>
            <person name="Rowley D."/>
            <person name="Sakano H."/>
            <person name="Salzberg S.L."/>
            <person name="Schwartz J.R."/>
            <person name="Shinn P."/>
            <person name="Southwick A.M."/>
            <person name="Sun H."/>
            <person name="Tallon L.J."/>
            <person name="Tambunga G."/>
            <person name="Toriumi M.J."/>
            <person name="Town C.D."/>
            <person name="Utterback T."/>
            <person name="Van Aken S."/>
            <person name="Vaysberg M."/>
            <person name="Vysotskaia V.S."/>
            <person name="Walker M."/>
            <person name="Wu D."/>
            <person name="Yu G."/>
            <person name="Fraser C.M."/>
            <person name="Venter J.C."/>
            <person name="Davis R.W."/>
        </authorList>
    </citation>
    <scope>NUCLEOTIDE SEQUENCE [LARGE SCALE GENOMIC DNA]</scope>
    <source>
        <strain>cv. Columbia</strain>
    </source>
</reference>
<reference key="4">
    <citation type="journal article" date="2017" name="Plant J.">
        <title>Araport11: a complete reannotation of the Arabidopsis thaliana reference genome.</title>
        <authorList>
            <person name="Cheng C.Y."/>
            <person name="Krishnakumar V."/>
            <person name="Chan A.P."/>
            <person name="Thibaud-Nissen F."/>
            <person name="Schobel S."/>
            <person name="Town C.D."/>
        </authorList>
    </citation>
    <scope>GENOME REANNOTATION</scope>
    <source>
        <strain>cv. Columbia</strain>
    </source>
</reference>
<reference key="5">
    <citation type="journal article" date="2003" name="Science">
        <title>Empirical analysis of transcriptional activity in the Arabidopsis genome.</title>
        <authorList>
            <person name="Yamada K."/>
            <person name="Lim J."/>
            <person name="Dale J.M."/>
            <person name="Chen H."/>
            <person name="Shinn P."/>
            <person name="Palm C.J."/>
            <person name="Southwick A.M."/>
            <person name="Wu H.C."/>
            <person name="Kim C.J."/>
            <person name="Nguyen M."/>
            <person name="Pham P.K."/>
            <person name="Cheuk R.F."/>
            <person name="Karlin-Newmann G."/>
            <person name="Liu S.X."/>
            <person name="Lam B."/>
            <person name="Sakano H."/>
            <person name="Wu T."/>
            <person name="Yu G."/>
            <person name="Miranda M."/>
            <person name="Quach H.L."/>
            <person name="Tripp M."/>
            <person name="Chang C.H."/>
            <person name="Lee J.M."/>
            <person name="Toriumi M.J."/>
            <person name="Chan M.M."/>
            <person name="Tang C.C."/>
            <person name="Onodera C.S."/>
            <person name="Deng J.M."/>
            <person name="Akiyama K."/>
            <person name="Ansari Y."/>
            <person name="Arakawa T."/>
            <person name="Banh J."/>
            <person name="Banno F."/>
            <person name="Bowser L."/>
            <person name="Brooks S.Y."/>
            <person name="Carninci P."/>
            <person name="Chao Q."/>
            <person name="Choy N."/>
            <person name="Enju A."/>
            <person name="Goldsmith A.D."/>
            <person name="Gurjal M."/>
            <person name="Hansen N.F."/>
            <person name="Hayashizaki Y."/>
            <person name="Johnson-Hopson C."/>
            <person name="Hsuan V.W."/>
            <person name="Iida K."/>
            <person name="Karnes M."/>
            <person name="Khan S."/>
            <person name="Koesema E."/>
            <person name="Ishida J."/>
            <person name="Jiang P.X."/>
            <person name="Jones T."/>
            <person name="Kawai J."/>
            <person name="Kamiya A."/>
            <person name="Meyers C."/>
            <person name="Nakajima M."/>
            <person name="Narusaka M."/>
            <person name="Seki M."/>
            <person name="Sakurai T."/>
            <person name="Satou M."/>
            <person name="Tamse R."/>
            <person name="Vaysberg M."/>
            <person name="Wallender E.K."/>
            <person name="Wong C."/>
            <person name="Yamamura Y."/>
            <person name="Yuan S."/>
            <person name="Shinozaki K."/>
            <person name="Davis R.W."/>
            <person name="Theologis A."/>
            <person name="Ecker J.R."/>
        </authorList>
    </citation>
    <scope>NUCLEOTIDE SEQUENCE [LARGE SCALE MRNA]</scope>
    <source>
        <strain>cv. Columbia</strain>
    </source>
</reference>
<reference key="6">
    <citation type="journal article" date="1997" name="Plant J.">
        <title>Characterization of a novel eukaryotic ATP/ADP translocator located in the plastid envelope of Arabidopsis thaliana L.</title>
        <authorList>
            <person name="Neuhaus H.E."/>
            <person name="Thom E."/>
            <person name="Mohlmann T."/>
            <person name="Steup M."/>
            <person name="Kampfenkel K."/>
        </authorList>
    </citation>
    <scope>FUNCTION</scope>
    <scope>SUBCELLULAR LOCATION</scope>
</reference>
<reference key="7">
    <citation type="journal article" date="2009" name="Plant Physiol.">
        <title>Large-scale Arabidopsis phosphoproteome profiling reveals novel chloroplast kinase substrates and phosphorylation networks.</title>
        <authorList>
            <person name="Reiland S."/>
            <person name="Messerli G."/>
            <person name="Baerenfaller K."/>
            <person name="Gerrits B."/>
            <person name="Endler A."/>
            <person name="Grossmann J."/>
            <person name="Gruissem W."/>
            <person name="Baginsky S."/>
        </authorList>
    </citation>
    <scope>IDENTIFICATION BY MASS SPECTROMETRY [LARGE SCALE ANALYSIS]</scope>
</reference>
<reference key="8">
    <citation type="journal article" date="2012" name="Mol. Cell. Proteomics">
        <title>Comparative large-scale characterisation of plant vs. mammal proteins reveals similar and idiosyncratic N-alpha acetylation features.</title>
        <authorList>
            <person name="Bienvenut W.V."/>
            <person name="Sumpton D."/>
            <person name="Martinez A."/>
            <person name="Lilla S."/>
            <person name="Espagne C."/>
            <person name="Meinnel T."/>
            <person name="Giglione C."/>
        </authorList>
    </citation>
    <scope>ACETYLATION [LARGE SCALE ANALYSIS] AT ALA-80</scope>
    <scope>CLEAVAGE OF TRANSIT PEPTIDE [LARGE SCALE ANALYSIS] AFTER LYS-79</scope>
    <scope>IDENTIFICATION BY MASS SPECTROMETRY [LARGE SCALE ANALYSIS]</scope>
</reference>